<gene>
    <name type="primary">sec62</name>
    <name type="ORF">SPAC17G6.09</name>
</gene>
<organism>
    <name type="scientific">Schizosaccharomyces pombe (strain 972 / ATCC 24843)</name>
    <name type="common">Fission yeast</name>
    <dbReference type="NCBI Taxonomy" id="284812"/>
    <lineage>
        <taxon>Eukaryota</taxon>
        <taxon>Fungi</taxon>
        <taxon>Dikarya</taxon>
        <taxon>Ascomycota</taxon>
        <taxon>Taphrinomycotina</taxon>
        <taxon>Schizosaccharomycetes</taxon>
        <taxon>Schizosaccharomycetales</taxon>
        <taxon>Schizosaccharomycetaceae</taxon>
        <taxon>Schizosaccharomyces</taxon>
    </lineage>
</organism>
<evidence type="ECO:0000250" key="1"/>
<evidence type="ECO:0000255" key="2"/>
<evidence type="ECO:0000256" key="3">
    <source>
        <dbReference type="SAM" id="MobiDB-lite"/>
    </source>
</evidence>
<evidence type="ECO:0000305" key="4"/>
<dbReference type="EMBL" id="CU329670">
    <property type="protein sequence ID" value="CAB16220.1"/>
    <property type="molecule type" value="Genomic_DNA"/>
</dbReference>
<dbReference type="PIR" id="T37841">
    <property type="entry name" value="T37841"/>
</dbReference>
<dbReference type="RefSeq" id="NP_594256.1">
    <property type="nucleotide sequence ID" value="NM_001019679.2"/>
</dbReference>
<dbReference type="SMR" id="O13787"/>
<dbReference type="BioGRID" id="278860">
    <property type="interactions" value="7"/>
</dbReference>
<dbReference type="FunCoup" id="O13787">
    <property type="interactions" value="156"/>
</dbReference>
<dbReference type="IntAct" id="O13787">
    <property type="interactions" value="2"/>
</dbReference>
<dbReference type="STRING" id="284812.O13787"/>
<dbReference type="iPTMnet" id="O13787"/>
<dbReference type="PaxDb" id="4896-SPAC17G6.09.1"/>
<dbReference type="EnsemblFungi" id="SPAC17G6.09.1">
    <property type="protein sequence ID" value="SPAC17G6.09.1:pep"/>
    <property type="gene ID" value="SPAC17G6.09"/>
</dbReference>
<dbReference type="GeneID" id="2542396"/>
<dbReference type="KEGG" id="spo:2542396"/>
<dbReference type="PomBase" id="SPAC17G6.09">
    <property type="gene designation" value="sec62"/>
</dbReference>
<dbReference type="VEuPathDB" id="FungiDB:SPAC17G6.09"/>
<dbReference type="eggNOG" id="KOG2927">
    <property type="taxonomic scope" value="Eukaryota"/>
</dbReference>
<dbReference type="HOGENOM" id="CLU_040936_1_0_1"/>
<dbReference type="InParanoid" id="O13787"/>
<dbReference type="OMA" id="WGWQETK"/>
<dbReference type="PhylomeDB" id="O13787"/>
<dbReference type="PRO" id="PR:O13787"/>
<dbReference type="Proteomes" id="UP000002485">
    <property type="component" value="Chromosome I"/>
</dbReference>
<dbReference type="GO" id="GO:0005783">
    <property type="term" value="C:endoplasmic reticulum"/>
    <property type="evidence" value="ECO:0007005"/>
    <property type="project" value="PomBase"/>
</dbReference>
<dbReference type="GO" id="GO:0016020">
    <property type="term" value="C:membrane"/>
    <property type="evidence" value="ECO:0000318"/>
    <property type="project" value="GO_Central"/>
</dbReference>
<dbReference type="GO" id="GO:0031207">
    <property type="term" value="C:Sec62/Sec63 complex"/>
    <property type="evidence" value="ECO:0000266"/>
    <property type="project" value="PomBase"/>
</dbReference>
<dbReference type="GO" id="GO:0031204">
    <property type="term" value="P:post-translational protein targeting to membrane, translocation"/>
    <property type="evidence" value="ECO:0000318"/>
    <property type="project" value="GO_Central"/>
</dbReference>
<dbReference type="InterPro" id="IPR004728">
    <property type="entry name" value="Sec62"/>
</dbReference>
<dbReference type="InterPro" id="IPR011553">
    <property type="entry name" value="Sec62_asco"/>
</dbReference>
<dbReference type="NCBIfam" id="TIGR00869">
    <property type="entry name" value="sec62"/>
    <property type="match status" value="1"/>
</dbReference>
<dbReference type="PANTHER" id="PTHR12443">
    <property type="entry name" value="TRANSLOCATION PROTEIN SEC62"/>
    <property type="match status" value="1"/>
</dbReference>
<dbReference type="PANTHER" id="PTHR12443:SF9">
    <property type="entry name" value="TRANSLOCATION PROTEIN SEC62"/>
    <property type="match status" value="1"/>
</dbReference>
<dbReference type="Pfam" id="PF03839">
    <property type="entry name" value="Sec62"/>
    <property type="match status" value="1"/>
</dbReference>
<accession>O13787</accession>
<keyword id="KW-0256">Endoplasmic reticulum</keyword>
<keyword id="KW-0472">Membrane</keyword>
<keyword id="KW-0653">Protein transport</keyword>
<keyword id="KW-1185">Reference proteome</keyword>
<keyword id="KW-0811">Translocation</keyword>
<keyword id="KW-0812">Transmembrane</keyword>
<keyword id="KW-1133">Transmembrane helix</keyword>
<keyword id="KW-0813">Transport</keyword>
<feature type="chain" id="PRO_0000206625" description="Translocation protein sec62">
    <location>
        <begin position="1"/>
        <end position="273"/>
    </location>
</feature>
<feature type="topological domain" description="Cytoplasmic" evidence="2">
    <location>
        <begin position="1"/>
        <end position="132"/>
    </location>
</feature>
<feature type="transmembrane region" description="Helical" evidence="2">
    <location>
        <begin position="133"/>
        <end position="153"/>
    </location>
</feature>
<feature type="topological domain" description="Lumenal" evidence="2">
    <location>
        <begin position="154"/>
        <end position="167"/>
    </location>
</feature>
<feature type="transmembrane region" description="Helical" evidence="2">
    <location>
        <begin position="168"/>
        <end position="188"/>
    </location>
</feature>
<feature type="topological domain" description="Cytoplasmic" evidence="2">
    <location>
        <begin position="189"/>
        <end position="273"/>
    </location>
</feature>
<feature type="region of interest" description="Disordered" evidence="3">
    <location>
        <begin position="225"/>
        <end position="273"/>
    </location>
</feature>
<feature type="compositionally biased region" description="Basic residues" evidence="3">
    <location>
        <begin position="228"/>
        <end position="237"/>
    </location>
</feature>
<feature type="compositionally biased region" description="Low complexity" evidence="3">
    <location>
        <begin position="238"/>
        <end position="259"/>
    </location>
</feature>
<proteinExistence type="inferred from homology"/>
<name>SEC62_SCHPO</name>
<sequence>MDSSNVPVLKDEDKCKFSMRFTNFLKSRPELKTKPAILNGKRVYYFRVKRVLRFLTSEAYTPKKYKGFPEISSREEAIEVLKLLIMNSMLVRVDKLPPKQRKQKLVELQINRNQDFQDDMHYVWLYEPLPKRVMALAVLFALVVLALVLFPLWPMFMRKGAWYLSMGGLGVIGLFFVLVILRFFLFCITAVIVRPGIWLFPNLLADVGFCDSFKPLWSWHNSKSEVKKTRKSKKLSKKATSPAASATPEKSSTSTTSLKNLRHRNPTVEEVSE</sequence>
<protein>
    <recommendedName>
        <fullName>Translocation protein sec62</fullName>
    </recommendedName>
</protein>
<reference key="1">
    <citation type="journal article" date="2002" name="Nature">
        <title>The genome sequence of Schizosaccharomyces pombe.</title>
        <authorList>
            <person name="Wood V."/>
            <person name="Gwilliam R."/>
            <person name="Rajandream M.A."/>
            <person name="Lyne M.H."/>
            <person name="Lyne R."/>
            <person name="Stewart A."/>
            <person name="Sgouros J.G."/>
            <person name="Peat N."/>
            <person name="Hayles J."/>
            <person name="Baker S.G."/>
            <person name="Basham D."/>
            <person name="Bowman S."/>
            <person name="Brooks K."/>
            <person name="Brown D."/>
            <person name="Brown S."/>
            <person name="Chillingworth T."/>
            <person name="Churcher C.M."/>
            <person name="Collins M."/>
            <person name="Connor R."/>
            <person name="Cronin A."/>
            <person name="Davis P."/>
            <person name="Feltwell T."/>
            <person name="Fraser A."/>
            <person name="Gentles S."/>
            <person name="Goble A."/>
            <person name="Hamlin N."/>
            <person name="Harris D.E."/>
            <person name="Hidalgo J."/>
            <person name="Hodgson G."/>
            <person name="Holroyd S."/>
            <person name="Hornsby T."/>
            <person name="Howarth S."/>
            <person name="Huckle E.J."/>
            <person name="Hunt S."/>
            <person name="Jagels K."/>
            <person name="James K.D."/>
            <person name="Jones L."/>
            <person name="Jones M."/>
            <person name="Leather S."/>
            <person name="McDonald S."/>
            <person name="McLean J."/>
            <person name="Mooney P."/>
            <person name="Moule S."/>
            <person name="Mungall K.L."/>
            <person name="Murphy L.D."/>
            <person name="Niblett D."/>
            <person name="Odell C."/>
            <person name="Oliver K."/>
            <person name="O'Neil S."/>
            <person name="Pearson D."/>
            <person name="Quail M.A."/>
            <person name="Rabbinowitsch E."/>
            <person name="Rutherford K.M."/>
            <person name="Rutter S."/>
            <person name="Saunders D."/>
            <person name="Seeger K."/>
            <person name="Sharp S."/>
            <person name="Skelton J."/>
            <person name="Simmonds M.N."/>
            <person name="Squares R."/>
            <person name="Squares S."/>
            <person name="Stevens K."/>
            <person name="Taylor K."/>
            <person name="Taylor R.G."/>
            <person name="Tivey A."/>
            <person name="Walsh S.V."/>
            <person name="Warren T."/>
            <person name="Whitehead S."/>
            <person name="Woodward J.R."/>
            <person name="Volckaert G."/>
            <person name="Aert R."/>
            <person name="Robben J."/>
            <person name="Grymonprez B."/>
            <person name="Weltjens I."/>
            <person name="Vanstreels E."/>
            <person name="Rieger M."/>
            <person name="Schaefer M."/>
            <person name="Mueller-Auer S."/>
            <person name="Gabel C."/>
            <person name="Fuchs M."/>
            <person name="Duesterhoeft A."/>
            <person name="Fritzc C."/>
            <person name="Holzer E."/>
            <person name="Moestl D."/>
            <person name="Hilbert H."/>
            <person name="Borzym K."/>
            <person name="Langer I."/>
            <person name="Beck A."/>
            <person name="Lehrach H."/>
            <person name="Reinhardt R."/>
            <person name="Pohl T.M."/>
            <person name="Eger P."/>
            <person name="Zimmermann W."/>
            <person name="Wedler H."/>
            <person name="Wambutt R."/>
            <person name="Purnelle B."/>
            <person name="Goffeau A."/>
            <person name="Cadieu E."/>
            <person name="Dreano S."/>
            <person name="Gloux S."/>
            <person name="Lelaure V."/>
            <person name="Mottier S."/>
            <person name="Galibert F."/>
            <person name="Aves S.J."/>
            <person name="Xiang Z."/>
            <person name="Hunt C."/>
            <person name="Moore K."/>
            <person name="Hurst S.M."/>
            <person name="Lucas M."/>
            <person name="Rochet M."/>
            <person name="Gaillardin C."/>
            <person name="Tallada V.A."/>
            <person name="Garzon A."/>
            <person name="Thode G."/>
            <person name="Daga R.R."/>
            <person name="Cruzado L."/>
            <person name="Jimenez J."/>
            <person name="Sanchez M."/>
            <person name="del Rey F."/>
            <person name="Benito J."/>
            <person name="Dominguez A."/>
            <person name="Revuelta J.L."/>
            <person name="Moreno S."/>
            <person name="Armstrong J."/>
            <person name="Forsburg S.L."/>
            <person name="Cerutti L."/>
            <person name="Lowe T."/>
            <person name="McCombie W.R."/>
            <person name="Paulsen I."/>
            <person name="Potashkin J."/>
            <person name="Shpakovski G.V."/>
            <person name="Ussery D."/>
            <person name="Barrell B.G."/>
            <person name="Nurse P."/>
        </authorList>
    </citation>
    <scope>NUCLEOTIDE SEQUENCE [LARGE SCALE GENOMIC DNA]</scope>
    <source>
        <strain>972 / ATCC 24843</strain>
    </source>
</reference>
<reference key="2">
    <citation type="journal article" date="2006" name="Nat. Biotechnol.">
        <title>ORFeome cloning and global analysis of protein localization in the fission yeast Schizosaccharomyces pombe.</title>
        <authorList>
            <person name="Matsuyama A."/>
            <person name="Arai R."/>
            <person name="Yashiroda Y."/>
            <person name="Shirai A."/>
            <person name="Kamata A."/>
            <person name="Sekido S."/>
            <person name="Kobayashi Y."/>
            <person name="Hashimoto A."/>
            <person name="Hamamoto M."/>
            <person name="Hiraoka Y."/>
            <person name="Horinouchi S."/>
            <person name="Yoshida M."/>
        </authorList>
    </citation>
    <scope>SUBCELLULAR LOCATION [LARGE SCALE ANALYSIS]</scope>
</reference>
<comment type="function">
    <text evidence="1">Acts as a component of the Sec62/63 complex which is involved in SRP-independent post-translational translocation across the endoplasmic reticulum (ER) and functions together with the Sec61 complex and bip1 in a channel-forming translocon complex. In an initial step, the signal sequence seems to bind simultaneously to sec61 and sec62. sec62 and sec63 are required for interactions between sec61 and translocating polypeptides. sec62 may affect sec61-polypeptide interactions by increasing the affinity of targeting pathways for sec61 and/or by modifying sec61 to allow more efficient polypeptide interaction. A cycle of assembly and disassembly of Sec62/63 complex from sec61 may govern the activity of the translocon (By similarity).</text>
</comment>
<comment type="subunit">
    <text evidence="1">Component of the heterotetrameric Sec62/63complex composed of sec62, sec63, sec66 and sec72. The Sec62/63 complex associates with the Sec61 complex to form the Sec complex (By similarity).</text>
</comment>
<comment type="subcellular location">
    <subcellularLocation>
        <location evidence="4">Endoplasmic reticulum membrane</location>
        <topology evidence="4">Multi-pass membrane protein</topology>
    </subcellularLocation>
</comment>
<comment type="similarity">
    <text evidence="4">Belongs to the SEC62 family.</text>
</comment>